<protein>
    <recommendedName>
        <fullName evidence="1">Tol-Pal system protein TolB</fullName>
    </recommendedName>
</protein>
<organism>
    <name type="scientific">Myxococcus xanthus (strain DK1622)</name>
    <dbReference type="NCBI Taxonomy" id="246197"/>
    <lineage>
        <taxon>Bacteria</taxon>
        <taxon>Pseudomonadati</taxon>
        <taxon>Myxococcota</taxon>
        <taxon>Myxococcia</taxon>
        <taxon>Myxococcales</taxon>
        <taxon>Cystobacterineae</taxon>
        <taxon>Myxococcaceae</taxon>
        <taxon>Myxococcus</taxon>
    </lineage>
</organism>
<keyword id="KW-0131">Cell cycle</keyword>
<keyword id="KW-0132">Cell division</keyword>
<keyword id="KW-0574">Periplasm</keyword>
<keyword id="KW-1185">Reference proteome</keyword>
<keyword id="KW-0732">Signal</keyword>
<proteinExistence type="inferred from homology"/>
<name>TOLB_MYXXD</name>
<reference key="1">
    <citation type="journal article" date="2006" name="Proc. Natl. Acad. Sci. U.S.A.">
        <title>Evolution of sensory complexity recorded in a myxobacterial genome.</title>
        <authorList>
            <person name="Goldman B.S."/>
            <person name="Nierman W.C."/>
            <person name="Kaiser D."/>
            <person name="Slater S.C."/>
            <person name="Durkin A.S."/>
            <person name="Eisen J.A."/>
            <person name="Ronning C.M."/>
            <person name="Barbazuk W.B."/>
            <person name="Blanchard M."/>
            <person name="Field C."/>
            <person name="Halling C."/>
            <person name="Hinkle G."/>
            <person name="Iartchuk O."/>
            <person name="Kim H.S."/>
            <person name="Mackenzie C."/>
            <person name="Madupu R."/>
            <person name="Miller N."/>
            <person name="Shvartsbeyn A."/>
            <person name="Sullivan S.A."/>
            <person name="Vaudin M."/>
            <person name="Wiegand R."/>
            <person name="Kaplan H.B."/>
        </authorList>
    </citation>
    <scope>NUCLEOTIDE SEQUENCE [LARGE SCALE GENOMIC DNA]</scope>
    <source>
        <strain>DK1622</strain>
    </source>
</reference>
<comment type="function">
    <text evidence="1">Part of the Tol-Pal system, which plays a role in outer membrane invagination during cell division and is important for maintaining outer membrane integrity.</text>
</comment>
<comment type="subunit">
    <text evidence="1">The Tol-Pal system is composed of five core proteins: the inner membrane proteins TolA, TolQ and TolR, the periplasmic protein TolB and the outer membrane protein Pal. They form a network linking the inner and outer membranes and the peptidoglycan layer.</text>
</comment>
<comment type="subcellular location">
    <subcellularLocation>
        <location evidence="1">Periplasm</location>
    </subcellularLocation>
</comment>
<comment type="similarity">
    <text evidence="1">Belongs to the TolB family.</text>
</comment>
<gene>
    <name evidence="1" type="primary">tolB</name>
    <name type="ordered locus">MXAN_5756</name>
</gene>
<evidence type="ECO:0000255" key="1">
    <source>
        <dbReference type="HAMAP-Rule" id="MF_00671"/>
    </source>
</evidence>
<evidence type="ECO:0000256" key="2">
    <source>
        <dbReference type="SAM" id="MobiDB-lite"/>
    </source>
</evidence>
<feature type="signal peptide" evidence="1">
    <location>
        <begin position="1"/>
        <end position="18"/>
    </location>
</feature>
<feature type="chain" id="PRO_0000259058" description="Tol-Pal system protein TolB" evidence="1">
    <location>
        <begin position="19"/>
        <end position="431"/>
    </location>
</feature>
<feature type="region of interest" description="Disordered" evidence="2">
    <location>
        <begin position="410"/>
        <end position="431"/>
    </location>
</feature>
<accession>Q1D0D0</accession>
<sequence length="431" mass="46035">MKALLLSLLLLLPVVALAQAPTIEISGANFRPLPVAVPAPLTQNDGAKALVAPFDSAFSFDLTASGILQVLDRKGFTADAKEGMAAASINFSRWADVGAEALVKVSLAQDGGVLRGELRLFNVGTGREDLKVSKDAPADNASLLAHRLADALYRHFTREPSPFLSRITYVRKAGTNRDVYVADWDGGNARALTKGGINILPALSQDGSQVAFTTYRKNRPDIYVQSPGGEAKAVISGGQMATGAAFSPDGKRIAYSLAEGESAQVYVANADGSGARALTDTPYGLNTSPTWSPDGKRIAFVSNRGGSPQVYIMNADGTGVRRLTFQGNYNQTPDWSPRGDLIVFTARDERNAFDLFTVSVETGKVTRLTQDQGSNEEPAFSPNGRLIVFTSTRNGGSQLYVMTADGNNQLPLRTEKGTYQTPDWSPLPQAQ</sequence>
<dbReference type="EMBL" id="CP000113">
    <property type="protein sequence ID" value="ABF89846.1"/>
    <property type="molecule type" value="Genomic_DNA"/>
</dbReference>
<dbReference type="RefSeq" id="WP_011555707.1">
    <property type="nucleotide sequence ID" value="NC_008095.1"/>
</dbReference>
<dbReference type="SMR" id="Q1D0D0"/>
<dbReference type="STRING" id="246197.MXAN_5756"/>
<dbReference type="EnsemblBacteria" id="ABF89846">
    <property type="protein sequence ID" value="ABF89846"/>
    <property type="gene ID" value="MXAN_5756"/>
</dbReference>
<dbReference type="GeneID" id="41362999"/>
<dbReference type="KEGG" id="mxa:MXAN_5756"/>
<dbReference type="eggNOG" id="COG0823">
    <property type="taxonomic scope" value="Bacteria"/>
</dbReference>
<dbReference type="HOGENOM" id="CLU_047123_2_0_7"/>
<dbReference type="OrthoDB" id="9815657at2"/>
<dbReference type="Proteomes" id="UP000002402">
    <property type="component" value="Chromosome"/>
</dbReference>
<dbReference type="GO" id="GO:0042597">
    <property type="term" value="C:periplasmic space"/>
    <property type="evidence" value="ECO:0007669"/>
    <property type="project" value="UniProtKB-SubCell"/>
</dbReference>
<dbReference type="GO" id="GO:0051301">
    <property type="term" value="P:cell division"/>
    <property type="evidence" value="ECO:0007669"/>
    <property type="project" value="UniProtKB-KW"/>
</dbReference>
<dbReference type="GO" id="GO:0017038">
    <property type="term" value="P:protein import"/>
    <property type="evidence" value="ECO:0007669"/>
    <property type="project" value="InterPro"/>
</dbReference>
<dbReference type="Gene3D" id="2.120.10.30">
    <property type="entry name" value="TolB, C-terminal domain"/>
    <property type="match status" value="2"/>
</dbReference>
<dbReference type="Gene3D" id="3.40.50.10070">
    <property type="entry name" value="TolB, N-terminal domain"/>
    <property type="match status" value="1"/>
</dbReference>
<dbReference type="HAMAP" id="MF_00671">
    <property type="entry name" value="TolB"/>
    <property type="match status" value="1"/>
</dbReference>
<dbReference type="InterPro" id="IPR011042">
    <property type="entry name" value="6-blade_b-propeller_TolB-like"/>
</dbReference>
<dbReference type="InterPro" id="IPR011659">
    <property type="entry name" value="PD40"/>
</dbReference>
<dbReference type="InterPro" id="IPR014167">
    <property type="entry name" value="Tol-Pal_TolB"/>
</dbReference>
<dbReference type="InterPro" id="IPR007195">
    <property type="entry name" value="TolB_N"/>
</dbReference>
<dbReference type="NCBIfam" id="TIGR02800">
    <property type="entry name" value="propeller_TolB"/>
    <property type="match status" value="1"/>
</dbReference>
<dbReference type="PANTHER" id="PTHR36842:SF1">
    <property type="entry name" value="PROTEIN TOLB"/>
    <property type="match status" value="1"/>
</dbReference>
<dbReference type="PANTHER" id="PTHR36842">
    <property type="entry name" value="PROTEIN TOLB HOMOLOG"/>
    <property type="match status" value="1"/>
</dbReference>
<dbReference type="Pfam" id="PF07676">
    <property type="entry name" value="PD40"/>
    <property type="match status" value="4"/>
</dbReference>
<dbReference type="Pfam" id="PF04052">
    <property type="entry name" value="TolB_N"/>
    <property type="match status" value="1"/>
</dbReference>
<dbReference type="SUPFAM" id="SSF52964">
    <property type="entry name" value="TolB, N-terminal domain"/>
    <property type="match status" value="1"/>
</dbReference>
<dbReference type="SUPFAM" id="SSF69304">
    <property type="entry name" value="Tricorn protease N-terminal domain"/>
    <property type="match status" value="1"/>
</dbReference>